<accession>P95316</accession>
<accession>A6UQU7</accession>
<dbReference type="EMBL" id="U76620">
    <property type="protein sequence ID" value="AAC27725.1"/>
    <property type="molecule type" value="Genomic_DNA"/>
</dbReference>
<dbReference type="EMBL" id="CP000742">
    <property type="protein sequence ID" value="ABR54869.1"/>
    <property type="molecule type" value="Genomic_DNA"/>
</dbReference>
<dbReference type="RefSeq" id="WP_012065798.1">
    <property type="nucleotide sequence ID" value="NC_009634.1"/>
</dbReference>
<dbReference type="SMR" id="P95316"/>
<dbReference type="STRING" id="406327.Mevan_0966"/>
<dbReference type="GeneID" id="5325880"/>
<dbReference type="KEGG" id="mvn:Mevan_0966"/>
<dbReference type="eggNOG" id="arCOG01829">
    <property type="taxonomic scope" value="Archaea"/>
</dbReference>
<dbReference type="HOGENOM" id="CLU_051124_0_1_2"/>
<dbReference type="OrthoDB" id="102632at2157"/>
<dbReference type="Proteomes" id="UP000001107">
    <property type="component" value="Chromosome"/>
</dbReference>
<dbReference type="GO" id="GO:0097589">
    <property type="term" value="C:archaeal-type flagellum"/>
    <property type="evidence" value="ECO:0007669"/>
    <property type="project" value="UniProtKB-SubCell"/>
</dbReference>
<dbReference type="GO" id="GO:0005198">
    <property type="term" value="F:structural molecule activity"/>
    <property type="evidence" value="ECO:0007669"/>
    <property type="project" value="InterPro"/>
</dbReference>
<dbReference type="GO" id="GO:0097588">
    <property type="term" value="P:archaeal or bacterial-type flagellum-dependent cell motility"/>
    <property type="evidence" value="ECO:0007669"/>
    <property type="project" value="InterPro"/>
</dbReference>
<dbReference type="InterPro" id="IPR013373">
    <property type="entry name" value="Flagellin/pilin_N_arc"/>
</dbReference>
<dbReference type="InterPro" id="IPR002774">
    <property type="entry name" value="Flagellin_arc"/>
</dbReference>
<dbReference type="NCBIfam" id="TIGR02537">
    <property type="entry name" value="arch_flag_Nterm"/>
    <property type="match status" value="1"/>
</dbReference>
<dbReference type="NCBIfam" id="NF006325">
    <property type="entry name" value="PRK08541.1"/>
    <property type="match status" value="1"/>
</dbReference>
<dbReference type="PANTHER" id="PTHR35903">
    <property type="entry name" value="FLAGELLIN B1"/>
    <property type="match status" value="1"/>
</dbReference>
<dbReference type="PANTHER" id="PTHR35903:SF1">
    <property type="entry name" value="FLAGELLIN B1"/>
    <property type="match status" value="1"/>
</dbReference>
<dbReference type="Pfam" id="PF01917">
    <property type="entry name" value="Arch_flagellin"/>
    <property type="match status" value="1"/>
</dbReference>
<proteinExistence type="inferred from homology"/>
<keyword id="KW-0974">Archaeal flagellum</keyword>
<feature type="propeptide" id="PRO_0000009379" evidence="1">
    <location>
        <begin position="1"/>
        <end position="12"/>
    </location>
</feature>
<feature type="chain" id="PRO_0000009380" description="Flagellin B1">
    <location>
        <begin position="13"/>
        <end position="215"/>
    </location>
</feature>
<gene>
    <name type="primary">flaB1</name>
    <name type="ordered locus">Mevan_0966</name>
</gene>
<evidence type="ECO:0000250" key="1"/>
<evidence type="ECO:0000305" key="2"/>
<reference key="1">
    <citation type="journal article" date="1998" name="Mol. Gen. Genet.">
        <title>Flagellin genes of Methanococcus vannielii: amplification by the polymerase chain reaction, demonstration of signal peptides and identification of major components of the flagellar filament.</title>
        <authorList>
            <person name="Bayley D.P."/>
            <person name="Florian V."/>
            <person name="Klein A."/>
            <person name="Jarrell K.F."/>
        </authorList>
    </citation>
    <scope>NUCLEOTIDE SEQUENCE [GENOMIC DNA]</scope>
</reference>
<reference key="2">
    <citation type="submission" date="2007-06" db="EMBL/GenBank/DDBJ databases">
        <title>Complete sequence of Methanococcus vannielii SB.</title>
        <authorList>
            <consortium name="US DOE Joint Genome Institute"/>
            <person name="Copeland A."/>
            <person name="Lucas S."/>
            <person name="Lapidus A."/>
            <person name="Barry K."/>
            <person name="Glavina del Rio T."/>
            <person name="Dalin E."/>
            <person name="Tice H."/>
            <person name="Pitluck S."/>
            <person name="Chain P."/>
            <person name="Malfatti S."/>
            <person name="Shin M."/>
            <person name="Vergez L."/>
            <person name="Schmutz J."/>
            <person name="Larimer F."/>
            <person name="Land M."/>
            <person name="Hauser L."/>
            <person name="Kyrpides N."/>
            <person name="Anderson I."/>
            <person name="Sieprawska-Lupa M."/>
            <person name="Whitman W.B."/>
            <person name="Richardson P."/>
        </authorList>
    </citation>
    <scope>NUCLEOTIDE SEQUENCE [LARGE SCALE GENOMIC DNA]</scope>
    <source>
        <strain>ATCC 35089 / DSM 1224 / JCM 13029 / OCM 148 / SB</strain>
    </source>
</reference>
<organism>
    <name type="scientific">Methanococcus vannielii (strain ATCC 35089 / DSM 1224 / JCM 13029 / OCM 148 / SB)</name>
    <dbReference type="NCBI Taxonomy" id="406327"/>
    <lineage>
        <taxon>Archaea</taxon>
        <taxon>Methanobacteriati</taxon>
        <taxon>Methanobacteriota</taxon>
        <taxon>Methanomada group</taxon>
        <taxon>Methanococci</taxon>
        <taxon>Methanococcales</taxon>
        <taxon>Methanococcaceae</taxon>
        <taxon>Methanococcus</taxon>
    </lineage>
</organism>
<name>FLAB1_METVS</name>
<sequence>MSVKNFMNNKKGDSGIGTLIVFIAMVLVAAVAASVLINTSGFLQQKAATTGKESTEQVASGLQVMGVNGYQDGTNDANVSKMAIYVTPNAGSSAIDLTNSKLFVTYDGQTHVLAYDDVTDLTTGNSDIFDAINVGTPASEFHVAVLQDNDNSTGNGVINKGDIVAIVIETSDIFGNDGIPERKSVSGKVQPEFGAPGVFEFTTPATYTNKVLELQ</sequence>
<protein>
    <recommendedName>
        <fullName>Flagellin B1</fullName>
    </recommendedName>
</protein>
<comment type="function">
    <text>Flagellin is the subunit protein which polymerizes to form the filaments of archaeal flagella.</text>
</comment>
<comment type="subcellular location">
    <subcellularLocation>
        <location>Archaeal flagellum</location>
    </subcellularLocation>
</comment>
<comment type="similarity">
    <text evidence="2">Belongs to the archaeal flagellin family.</text>
</comment>